<name>CAS2A_PYRAE</name>
<keyword id="KW-0051">Antiviral defense</keyword>
<keyword id="KW-0255">Endonuclease</keyword>
<keyword id="KW-0378">Hydrolase</keyword>
<keyword id="KW-0460">Magnesium</keyword>
<keyword id="KW-0479">Metal-binding</keyword>
<keyword id="KW-0540">Nuclease</keyword>
<keyword id="KW-1185">Reference proteome</keyword>
<dbReference type="EC" id="3.1.-.-" evidence="1"/>
<dbReference type="EMBL" id="AE009441">
    <property type="protein sequence ID" value="AAL62547.1"/>
    <property type="molecule type" value="Genomic_DNA"/>
</dbReference>
<dbReference type="RefSeq" id="WP_011007019.1">
    <property type="nucleotide sequence ID" value="NC_003364.1"/>
</dbReference>
<dbReference type="SMR" id="Q8ZZU2"/>
<dbReference type="STRING" id="178306.PAE0080"/>
<dbReference type="EnsemblBacteria" id="AAL62547">
    <property type="protein sequence ID" value="AAL62547"/>
    <property type="gene ID" value="PAE0080"/>
</dbReference>
<dbReference type="GeneID" id="1464763"/>
<dbReference type="KEGG" id="pai:PAE0080"/>
<dbReference type="PATRIC" id="fig|178306.9.peg.55"/>
<dbReference type="eggNOG" id="arCOG04194">
    <property type="taxonomic scope" value="Archaea"/>
</dbReference>
<dbReference type="HOGENOM" id="CLU_161124_2_3_2"/>
<dbReference type="InParanoid" id="Q8ZZU2"/>
<dbReference type="Proteomes" id="UP000002439">
    <property type="component" value="Chromosome"/>
</dbReference>
<dbReference type="GO" id="GO:0046872">
    <property type="term" value="F:metal ion binding"/>
    <property type="evidence" value="ECO:0007669"/>
    <property type="project" value="UniProtKB-UniRule"/>
</dbReference>
<dbReference type="GO" id="GO:0004521">
    <property type="term" value="F:RNA endonuclease activity"/>
    <property type="evidence" value="ECO:0007669"/>
    <property type="project" value="InterPro"/>
</dbReference>
<dbReference type="GO" id="GO:0051607">
    <property type="term" value="P:defense response to virus"/>
    <property type="evidence" value="ECO:0007669"/>
    <property type="project" value="UniProtKB-UniRule"/>
</dbReference>
<dbReference type="GO" id="GO:0043571">
    <property type="term" value="P:maintenance of CRISPR repeat elements"/>
    <property type="evidence" value="ECO:0007669"/>
    <property type="project" value="UniProtKB-UniRule"/>
</dbReference>
<dbReference type="Gene3D" id="3.30.70.240">
    <property type="match status" value="1"/>
</dbReference>
<dbReference type="HAMAP" id="MF_01471">
    <property type="entry name" value="Cas2"/>
    <property type="match status" value="1"/>
</dbReference>
<dbReference type="InterPro" id="IPR021127">
    <property type="entry name" value="CRISPR_associated_Cas2"/>
</dbReference>
<dbReference type="InterPro" id="IPR019199">
    <property type="entry name" value="Virulence_VapD/CRISPR_Cas2"/>
</dbReference>
<dbReference type="NCBIfam" id="TIGR01573">
    <property type="entry name" value="cas2"/>
    <property type="match status" value="1"/>
</dbReference>
<dbReference type="PANTHER" id="PTHR34405">
    <property type="entry name" value="CRISPR-ASSOCIATED ENDORIBONUCLEASE CAS2"/>
    <property type="match status" value="1"/>
</dbReference>
<dbReference type="PANTHER" id="PTHR34405:SF3">
    <property type="entry name" value="CRISPR-ASSOCIATED ENDORIBONUCLEASE CAS2 3"/>
    <property type="match status" value="1"/>
</dbReference>
<dbReference type="Pfam" id="PF09827">
    <property type="entry name" value="CRISPR_Cas2"/>
    <property type="match status" value="1"/>
</dbReference>
<dbReference type="SUPFAM" id="SSF143430">
    <property type="entry name" value="TTP0101/SSO1404-like"/>
    <property type="match status" value="1"/>
</dbReference>
<reference key="1">
    <citation type="journal article" date="2002" name="Proc. Natl. Acad. Sci. U.S.A.">
        <title>Genome sequence of the hyperthermophilic crenarchaeon Pyrobaculum aerophilum.</title>
        <authorList>
            <person name="Fitz-Gibbon S.T."/>
            <person name="Ladner H."/>
            <person name="Kim U.-J."/>
            <person name="Stetter K.O."/>
            <person name="Simon M.I."/>
            <person name="Miller J.H."/>
        </authorList>
    </citation>
    <scope>NUCLEOTIDE SEQUENCE [LARGE SCALE GENOMIC DNA]</scope>
    <source>
        <strain>ATCC 51768 / DSM 7523 / JCM 9630 / CIP 104966 / NBRC 100827 / IM2</strain>
    </source>
</reference>
<feature type="chain" id="PRO_0000417749" description="CRISPR-associated endoribonuclease Cas2 1">
    <location>
        <begin position="1"/>
        <end position="95"/>
    </location>
</feature>
<feature type="binding site" evidence="1">
    <location>
        <position position="8"/>
    </location>
    <ligand>
        <name>Mg(2+)</name>
        <dbReference type="ChEBI" id="CHEBI:18420"/>
        <note>catalytic</note>
    </ligand>
</feature>
<organism>
    <name type="scientific">Pyrobaculum aerophilum (strain ATCC 51768 / DSM 7523 / JCM 9630 / CIP 104966 / NBRC 100827 / IM2)</name>
    <dbReference type="NCBI Taxonomy" id="178306"/>
    <lineage>
        <taxon>Archaea</taxon>
        <taxon>Thermoproteota</taxon>
        <taxon>Thermoprotei</taxon>
        <taxon>Thermoproteales</taxon>
        <taxon>Thermoproteaceae</taxon>
        <taxon>Pyrobaculum</taxon>
    </lineage>
</organism>
<gene>
    <name evidence="1" type="primary">cas2-1</name>
    <name type="ordered locus">PAE0080</name>
</gene>
<protein>
    <recommendedName>
        <fullName evidence="1">CRISPR-associated endoribonuclease Cas2 1</fullName>
        <ecNumber evidence="1">3.1.-.-</ecNumber>
    </recommendedName>
</protein>
<comment type="function">
    <text evidence="1">CRISPR (clustered regularly interspaced short palindromic repeat), is an adaptive immune system that provides protection against mobile genetic elements (viruses, transposable elements and conjugative plasmids). CRISPR clusters contain sequences complementary to antecedent mobile elements and target invading nucleic acids. CRISPR clusters are transcribed and processed into CRISPR RNA (crRNA). Functions as a ssRNA-specific endoribonuclease. Involved in the integration of spacer DNA into the CRISPR cassette.</text>
</comment>
<comment type="cofactor">
    <cofactor evidence="1">
        <name>Mg(2+)</name>
        <dbReference type="ChEBI" id="CHEBI:18420"/>
    </cofactor>
</comment>
<comment type="subunit">
    <text evidence="1">Homodimer, forms a heterotetramer with a Cas1 homodimer.</text>
</comment>
<comment type="similarity">
    <text evidence="1">Belongs to the CRISPR-associated endoribonuclease Cas2 protein family.</text>
</comment>
<proteinExistence type="inferred from homology"/>
<sequence length="95" mass="10714">MIWLAVYDIEDDGERAKASAILQAWGFVRVQRSFYVGRMPRGKAADLLKILQRHVKSGHIALIPITDELLAKALELGRPPYAPLKPPKYAQIYVV</sequence>
<accession>Q8ZZU2</accession>
<evidence type="ECO:0000255" key="1">
    <source>
        <dbReference type="HAMAP-Rule" id="MF_01471"/>
    </source>
</evidence>